<proteinExistence type="inferred from homology"/>
<sequence length="150" mass="16361">MQIILLEKVANLGNLGDIVKVKDGYARNFLIPNRKARRATKEAIAEFEVRRAELEKVAAEKLAASQAVGEKLNGQSFEITQKSGVDGRLFGSVTNGDIAELLKKAGYEVEKLQVRMPEGPLKMIGEHTVQVALHTDVVVDVTINVIGDHA</sequence>
<reference key="1">
    <citation type="submission" date="2006-08" db="EMBL/GenBank/DDBJ databases">
        <title>Complete sequence of chromosome 1 of Burkholderia cepacia AMMD.</title>
        <authorList>
            <person name="Copeland A."/>
            <person name="Lucas S."/>
            <person name="Lapidus A."/>
            <person name="Barry K."/>
            <person name="Detter J.C."/>
            <person name="Glavina del Rio T."/>
            <person name="Hammon N."/>
            <person name="Israni S."/>
            <person name="Pitluck S."/>
            <person name="Bruce D."/>
            <person name="Chain P."/>
            <person name="Malfatti S."/>
            <person name="Shin M."/>
            <person name="Vergez L."/>
            <person name="Schmutz J."/>
            <person name="Larimer F."/>
            <person name="Land M."/>
            <person name="Hauser L."/>
            <person name="Kyrpides N."/>
            <person name="Kim E."/>
            <person name="Parke J."/>
            <person name="Coenye T."/>
            <person name="Konstantinidis K."/>
            <person name="Ramette A."/>
            <person name="Tiedje J."/>
            <person name="Richardson P."/>
        </authorList>
    </citation>
    <scope>NUCLEOTIDE SEQUENCE [LARGE SCALE GENOMIC DNA]</scope>
    <source>
        <strain>ATCC BAA-244 / DSM 16087 / CCUG 44356 / LMG 19182 / AMMD</strain>
    </source>
</reference>
<gene>
    <name evidence="1" type="primary">rplI</name>
    <name type="ordered locus">Bamb_1808</name>
</gene>
<evidence type="ECO:0000255" key="1">
    <source>
        <dbReference type="HAMAP-Rule" id="MF_00503"/>
    </source>
</evidence>
<evidence type="ECO:0000305" key="2"/>
<keyword id="KW-0687">Ribonucleoprotein</keyword>
<keyword id="KW-0689">Ribosomal protein</keyword>
<keyword id="KW-0694">RNA-binding</keyword>
<keyword id="KW-0699">rRNA-binding</keyword>
<feature type="chain" id="PRO_1000014750" description="Large ribosomal subunit protein bL9">
    <location>
        <begin position="1"/>
        <end position="150"/>
    </location>
</feature>
<dbReference type="EMBL" id="CP000440">
    <property type="protein sequence ID" value="ABI87364.1"/>
    <property type="molecule type" value="Genomic_DNA"/>
</dbReference>
<dbReference type="RefSeq" id="WP_006755438.1">
    <property type="nucleotide sequence ID" value="NZ_CP009798.1"/>
</dbReference>
<dbReference type="SMR" id="Q0BEQ9"/>
<dbReference type="GeneID" id="93085986"/>
<dbReference type="KEGG" id="bam:Bamb_1808"/>
<dbReference type="PATRIC" id="fig|339670.21.peg.3151"/>
<dbReference type="eggNOG" id="COG0359">
    <property type="taxonomic scope" value="Bacteria"/>
</dbReference>
<dbReference type="Proteomes" id="UP000000662">
    <property type="component" value="Chromosome 1"/>
</dbReference>
<dbReference type="GO" id="GO:1990904">
    <property type="term" value="C:ribonucleoprotein complex"/>
    <property type="evidence" value="ECO:0007669"/>
    <property type="project" value="UniProtKB-KW"/>
</dbReference>
<dbReference type="GO" id="GO:0005840">
    <property type="term" value="C:ribosome"/>
    <property type="evidence" value="ECO:0007669"/>
    <property type="project" value="UniProtKB-KW"/>
</dbReference>
<dbReference type="GO" id="GO:0019843">
    <property type="term" value="F:rRNA binding"/>
    <property type="evidence" value="ECO:0007669"/>
    <property type="project" value="UniProtKB-UniRule"/>
</dbReference>
<dbReference type="GO" id="GO:0003735">
    <property type="term" value="F:structural constituent of ribosome"/>
    <property type="evidence" value="ECO:0007669"/>
    <property type="project" value="InterPro"/>
</dbReference>
<dbReference type="GO" id="GO:0006412">
    <property type="term" value="P:translation"/>
    <property type="evidence" value="ECO:0007669"/>
    <property type="project" value="UniProtKB-UniRule"/>
</dbReference>
<dbReference type="Gene3D" id="3.10.430.100">
    <property type="entry name" value="Ribosomal protein L9, C-terminal domain"/>
    <property type="match status" value="1"/>
</dbReference>
<dbReference type="Gene3D" id="3.40.5.10">
    <property type="entry name" value="Ribosomal protein L9, N-terminal domain"/>
    <property type="match status" value="1"/>
</dbReference>
<dbReference type="HAMAP" id="MF_00503">
    <property type="entry name" value="Ribosomal_bL9"/>
    <property type="match status" value="1"/>
</dbReference>
<dbReference type="InterPro" id="IPR000244">
    <property type="entry name" value="Ribosomal_bL9"/>
</dbReference>
<dbReference type="InterPro" id="IPR009027">
    <property type="entry name" value="Ribosomal_bL9/RNase_H1_N"/>
</dbReference>
<dbReference type="InterPro" id="IPR020594">
    <property type="entry name" value="Ribosomal_bL9_bac/chp"/>
</dbReference>
<dbReference type="InterPro" id="IPR020069">
    <property type="entry name" value="Ribosomal_bL9_C"/>
</dbReference>
<dbReference type="InterPro" id="IPR036791">
    <property type="entry name" value="Ribosomal_bL9_C_sf"/>
</dbReference>
<dbReference type="InterPro" id="IPR020070">
    <property type="entry name" value="Ribosomal_bL9_N"/>
</dbReference>
<dbReference type="InterPro" id="IPR036935">
    <property type="entry name" value="Ribosomal_bL9_N_sf"/>
</dbReference>
<dbReference type="NCBIfam" id="TIGR00158">
    <property type="entry name" value="L9"/>
    <property type="match status" value="1"/>
</dbReference>
<dbReference type="PANTHER" id="PTHR21368">
    <property type="entry name" value="50S RIBOSOMAL PROTEIN L9"/>
    <property type="match status" value="1"/>
</dbReference>
<dbReference type="Pfam" id="PF03948">
    <property type="entry name" value="Ribosomal_L9_C"/>
    <property type="match status" value="1"/>
</dbReference>
<dbReference type="Pfam" id="PF01281">
    <property type="entry name" value="Ribosomal_L9_N"/>
    <property type="match status" value="1"/>
</dbReference>
<dbReference type="SUPFAM" id="SSF55658">
    <property type="entry name" value="L9 N-domain-like"/>
    <property type="match status" value="1"/>
</dbReference>
<dbReference type="SUPFAM" id="SSF55653">
    <property type="entry name" value="Ribosomal protein L9 C-domain"/>
    <property type="match status" value="1"/>
</dbReference>
<dbReference type="PROSITE" id="PS00651">
    <property type="entry name" value="RIBOSOMAL_L9"/>
    <property type="match status" value="1"/>
</dbReference>
<protein>
    <recommendedName>
        <fullName evidence="1">Large ribosomal subunit protein bL9</fullName>
    </recommendedName>
    <alternativeName>
        <fullName evidence="2">50S ribosomal protein L9</fullName>
    </alternativeName>
</protein>
<accession>Q0BEQ9</accession>
<organism>
    <name type="scientific">Burkholderia ambifaria (strain ATCC BAA-244 / DSM 16087 / CCUG 44356 / LMG 19182 / AMMD)</name>
    <name type="common">Burkholderia cepacia (strain AMMD)</name>
    <dbReference type="NCBI Taxonomy" id="339670"/>
    <lineage>
        <taxon>Bacteria</taxon>
        <taxon>Pseudomonadati</taxon>
        <taxon>Pseudomonadota</taxon>
        <taxon>Betaproteobacteria</taxon>
        <taxon>Burkholderiales</taxon>
        <taxon>Burkholderiaceae</taxon>
        <taxon>Burkholderia</taxon>
        <taxon>Burkholderia cepacia complex</taxon>
    </lineage>
</organism>
<comment type="function">
    <text evidence="1">Binds to the 23S rRNA.</text>
</comment>
<comment type="similarity">
    <text evidence="1">Belongs to the bacterial ribosomal protein bL9 family.</text>
</comment>
<name>RL9_BURCM</name>